<reference key="1">
    <citation type="journal article" date="2002" name="Cytogenet. Genome Res.">
        <title>Identification and characterization of human taste receptor genes belonging to the TAS2R family.</title>
        <authorList>
            <person name="Conte C."/>
            <person name="Ebeling M."/>
            <person name="Marcuz A."/>
            <person name="Nef P."/>
            <person name="Andres-Barquin P.J."/>
        </authorList>
    </citation>
    <scope>NUCLEOTIDE SEQUENCE [GENOMIC DNA]</scope>
</reference>
<reference key="2">
    <citation type="journal article" date="2005" name="Mol. Biol. Evol.">
        <title>Evolution of bitter taste receptors in humans and apes.</title>
        <authorList>
            <person name="Fischer A."/>
            <person name="Gilad Y."/>
            <person name="Man O."/>
            <person name="Paeaebo S."/>
        </authorList>
    </citation>
    <scope>NUCLEOTIDE SEQUENCE [GENOMIC DNA]</scope>
</reference>
<reference key="3">
    <citation type="journal article" date="2003" name="Science">
        <title>Human chromosome 7: DNA sequence and biology.</title>
        <authorList>
            <person name="Scherer S.W."/>
            <person name="Cheung J."/>
            <person name="MacDonald J.R."/>
            <person name="Osborne L.R."/>
            <person name="Nakabayashi K."/>
            <person name="Herbrick J.-A."/>
            <person name="Carson A.R."/>
            <person name="Parker-Katiraee L."/>
            <person name="Skaug J."/>
            <person name="Khaja R."/>
            <person name="Zhang J."/>
            <person name="Hudek A.K."/>
            <person name="Li M."/>
            <person name="Haddad M."/>
            <person name="Duggan G.E."/>
            <person name="Fernandez B.A."/>
            <person name="Kanematsu E."/>
            <person name="Gentles S."/>
            <person name="Christopoulos C.C."/>
            <person name="Choufani S."/>
            <person name="Kwasnicka D."/>
            <person name="Zheng X.H."/>
            <person name="Lai Z."/>
            <person name="Nusskern D.R."/>
            <person name="Zhang Q."/>
            <person name="Gu Z."/>
            <person name="Lu F."/>
            <person name="Zeesman S."/>
            <person name="Nowaczyk M.J."/>
            <person name="Teshima I."/>
            <person name="Chitayat D."/>
            <person name="Shuman C."/>
            <person name="Weksberg R."/>
            <person name="Zackai E.H."/>
            <person name="Grebe T.A."/>
            <person name="Cox S.R."/>
            <person name="Kirkpatrick S.J."/>
            <person name="Rahman N."/>
            <person name="Friedman J.M."/>
            <person name="Heng H.H.Q."/>
            <person name="Pelicci P.G."/>
            <person name="Lo-Coco F."/>
            <person name="Belloni E."/>
            <person name="Shaffer L.G."/>
            <person name="Pober B."/>
            <person name="Morton C.C."/>
            <person name="Gusella J.F."/>
            <person name="Bruns G.A.P."/>
            <person name="Korf B.R."/>
            <person name="Quade B.J."/>
            <person name="Ligon A.H."/>
            <person name="Ferguson H."/>
            <person name="Higgins A.W."/>
            <person name="Leach N.T."/>
            <person name="Herrick S.R."/>
            <person name="Lemyre E."/>
            <person name="Farra C.G."/>
            <person name="Kim H.-G."/>
            <person name="Summers A.M."/>
            <person name="Gripp K.W."/>
            <person name="Roberts W."/>
            <person name="Szatmari P."/>
            <person name="Winsor E.J.T."/>
            <person name="Grzeschik K.-H."/>
            <person name="Teebi A."/>
            <person name="Minassian B.A."/>
            <person name="Kere J."/>
            <person name="Armengol L."/>
            <person name="Pujana M.A."/>
            <person name="Estivill X."/>
            <person name="Wilson M.D."/>
            <person name="Koop B.F."/>
            <person name="Tosi S."/>
            <person name="Moore G.E."/>
            <person name="Boright A.P."/>
            <person name="Zlotorynski E."/>
            <person name="Kerem B."/>
            <person name="Kroisel P.M."/>
            <person name="Petek E."/>
            <person name="Oscier D.G."/>
            <person name="Mould S.J."/>
            <person name="Doehner H."/>
            <person name="Doehner K."/>
            <person name="Rommens J.M."/>
            <person name="Vincent J.B."/>
            <person name="Venter J.C."/>
            <person name="Li P.W."/>
            <person name="Mural R.J."/>
            <person name="Adams M.D."/>
            <person name="Tsui L.-C."/>
        </authorList>
    </citation>
    <scope>NUCLEOTIDE SEQUENCE [LARGE SCALE GENOMIC DNA]</scope>
</reference>
<reference key="4">
    <citation type="journal article" date="2004" name="Genome Res.">
        <title>The status, quality, and expansion of the NIH full-length cDNA project: the Mammalian Gene Collection (MGC).</title>
        <authorList>
            <consortium name="The MGC Project Team"/>
        </authorList>
    </citation>
    <scope>NUCLEOTIDE SEQUENCE [LARGE SCALE MRNA]</scope>
</reference>
<reference key="5">
    <citation type="journal article" date="2003" name="Mol. Biol. Evol.">
        <title>Adaptive diversification of bitter taste receptor genes in mammalian evolution.</title>
        <authorList>
            <person name="Shi P."/>
            <person name="Zhang J."/>
            <person name="Yang H."/>
            <person name="Zhang Y.-P."/>
        </authorList>
    </citation>
    <scope>IDENTIFICATION</scope>
</reference>
<reference key="6">
    <citation type="journal article" date="2002" name="Curr. Opin. Neurobiol.">
        <title>Receptors for bitter and sweet taste.</title>
        <authorList>
            <person name="Montmayeur J.-P."/>
            <person name="Matsunami H."/>
        </authorList>
    </citation>
    <scope>REVIEW</scope>
</reference>
<reference key="7">
    <citation type="journal article" date="2002" name="J. Biol. Chem.">
        <title>Molecular mechanisms of bitter and sweet taste transduction.</title>
        <authorList>
            <person name="Margolskee R.F."/>
        </authorList>
    </citation>
    <scope>REVIEW</scope>
</reference>
<reference key="8">
    <citation type="journal article" date="2003" name="Cell">
        <title>Coding of sweet, bitter, and umami tastes: different receptor cells sharing similar signaling pathways.</title>
        <authorList>
            <person name="Zhang Y."/>
            <person name="Hoon M.A."/>
            <person name="Chandrashekar J."/>
            <person name="Mueller K.L."/>
            <person name="Cook B."/>
            <person name="Wu D."/>
            <person name="Zuker C.S."/>
            <person name="Ryba N.J."/>
        </authorList>
    </citation>
    <scope>REVIEW</scope>
</reference>
<name>T2R60_HUMAN</name>
<comment type="function">
    <text evidence="1">Receptor that may play a role in the perception of bitterness and is gustducin-linked. May play a role in sensing the chemical composition of the gastrointestinal content. The activity of this receptor may stimulate alpha gustducin, mediate PLC-beta-2 activation and lead to the gating of TRPM5 (By similarity).</text>
</comment>
<comment type="subcellular location">
    <subcellularLocation>
        <location>Membrane</location>
        <topology>Multi-pass membrane protein</topology>
    </subcellularLocation>
</comment>
<comment type="tissue specificity">
    <text>Expressed in subsets of taste receptor cells of the tongue and exclusively in gustducin-positive cells.</text>
</comment>
<comment type="miscellaneous">
    <text>Most taste cells may be activated by a limited number of bitter compounds; individual taste cells can discriminate among bitter stimuli.</text>
</comment>
<comment type="similarity">
    <text evidence="3">Belongs to the G-protein coupled receptor T2R family.</text>
</comment>
<keyword id="KW-0297">G-protein coupled receptor</keyword>
<keyword id="KW-0325">Glycoprotein</keyword>
<keyword id="KW-0472">Membrane</keyword>
<keyword id="KW-0675">Receptor</keyword>
<keyword id="KW-1185">Reference proteome</keyword>
<keyword id="KW-0716">Sensory transduction</keyword>
<keyword id="KW-0919">Taste</keyword>
<keyword id="KW-0807">Transducer</keyword>
<keyword id="KW-0812">Transmembrane</keyword>
<keyword id="KW-1133">Transmembrane helix</keyword>
<organism>
    <name type="scientific">Homo sapiens</name>
    <name type="common">Human</name>
    <dbReference type="NCBI Taxonomy" id="9606"/>
    <lineage>
        <taxon>Eukaryota</taxon>
        <taxon>Metazoa</taxon>
        <taxon>Chordata</taxon>
        <taxon>Craniata</taxon>
        <taxon>Vertebrata</taxon>
        <taxon>Euteleostomi</taxon>
        <taxon>Mammalia</taxon>
        <taxon>Eutheria</taxon>
        <taxon>Euarchontoglires</taxon>
        <taxon>Primates</taxon>
        <taxon>Haplorrhini</taxon>
        <taxon>Catarrhini</taxon>
        <taxon>Hominidae</taxon>
        <taxon>Homo</taxon>
    </lineage>
</organism>
<sequence length="318" mass="36337">MNGDHMVLGSSVTDKKAIILVTILLLLRLVAIAGNGFITAALGVEWVLRRMLLPCDKLLVSLGASRFCLQSVVMGKTIYVFLHPMAFPYNPVLQFLAFQWDFLNAATLWSSTWLSVFYCVKIATFTHPVFFWLKHKLSGWLPWMLFSSVGLSSFTTILFFIGNHRMYQNYLRNHLQPWNVTGDSIRSYCEKFYLFPLKMITWTMPTAVFFICMILLITSLGRHRKKALLTTSGFREPSVQAHIKALLALLSFAMLFISYFLSLVFSAAGIFPPLDFKFWVWESVIYLCAAVHPIILLFSNCRLRAVLKSRRSSRCGTP</sequence>
<proteinExistence type="evidence at transcript level"/>
<gene>
    <name type="primary">TAS2R60</name>
</gene>
<feature type="chain" id="PRO_0000082351" description="Taste receptor type 2 member 60">
    <location>
        <begin position="1"/>
        <end position="318"/>
    </location>
</feature>
<feature type="topological domain" description="Extracellular" evidence="2">
    <location>
        <begin position="1"/>
        <end position="7"/>
    </location>
</feature>
<feature type="transmembrane region" description="Helical; Name=1" evidence="2">
    <location>
        <begin position="8"/>
        <end position="28"/>
    </location>
</feature>
<feature type="topological domain" description="Cytoplasmic" evidence="2">
    <location>
        <begin position="29"/>
        <end position="40"/>
    </location>
</feature>
<feature type="transmembrane region" description="Helical; Name=2" evidence="2">
    <location>
        <begin position="41"/>
        <end position="61"/>
    </location>
</feature>
<feature type="topological domain" description="Extracellular" evidence="2">
    <location>
        <begin position="62"/>
        <end position="88"/>
    </location>
</feature>
<feature type="transmembrane region" description="Helical; Name=3" evidence="2">
    <location>
        <begin position="89"/>
        <end position="109"/>
    </location>
</feature>
<feature type="topological domain" description="Cytoplasmic" evidence="2">
    <location>
        <begin position="110"/>
        <end position="128"/>
    </location>
</feature>
<feature type="transmembrane region" description="Helical; Name=4" evidence="2">
    <location>
        <begin position="129"/>
        <end position="149"/>
    </location>
</feature>
<feature type="topological domain" description="Extracellular" evidence="2">
    <location>
        <begin position="150"/>
        <end position="183"/>
    </location>
</feature>
<feature type="transmembrane region" description="Helical; Name=5" evidence="2">
    <location>
        <begin position="184"/>
        <end position="204"/>
    </location>
</feature>
<feature type="topological domain" description="Cytoplasmic" evidence="2">
    <location>
        <begin position="205"/>
        <end position="234"/>
    </location>
</feature>
<feature type="transmembrane region" description="Helical; Name=6" evidence="2">
    <location>
        <begin position="235"/>
        <end position="255"/>
    </location>
</feature>
<feature type="topological domain" description="Extracellular" evidence="2">
    <location>
        <begin position="256"/>
        <end position="264"/>
    </location>
</feature>
<feature type="transmembrane region" description="Helical; Name=7" evidence="2">
    <location>
        <begin position="265"/>
        <end position="285"/>
    </location>
</feature>
<feature type="topological domain" description="Cytoplasmic" evidence="2">
    <location>
        <begin position="286"/>
        <end position="318"/>
    </location>
</feature>
<feature type="glycosylation site" description="N-linked (GlcNAc...) asparagine" evidence="2">
    <location>
        <position position="179"/>
    </location>
</feature>
<accession>P59551</accession>
<accession>A4D2G8</accession>
<accession>Q645W8</accession>
<accession>Q7RTR7</accession>
<dbReference type="EMBL" id="AY114094">
    <property type="protein sequence ID" value="AAM63544.1"/>
    <property type="molecule type" value="Genomic_DNA"/>
</dbReference>
<dbReference type="EMBL" id="AY724955">
    <property type="protein sequence ID" value="AAU21151.1"/>
    <property type="molecule type" value="Genomic_DNA"/>
</dbReference>
<dbReference type="EMBL" id="CH236959">
    <property type="protein sequence ID" value="EAL23790.1"/>
    <property type="molecule type" value="Genomic_DNA"/>
</dbReference>
<dbReference type="EMBL" id="BC100938">
    <property type="protein sequence ID" value="AAI00939.1"/>
    <property type="molecule type" value="mRNA"/>
</dbReference>
<dbReference type="EMBL" id="BC100939">
    <property type="protein sequence ID" value="AAI00940.1"/>
    <property type="molecule type" value="mRNA"/>
</dbReference>
<dbReference type="EMBL" id="BC100940">
    <property type="protein sequence ID" value="AAI00941.1"/>
    <property type="molecule type" value="mRNA"/>
</dbReference>
<dbReference type="EMBL" id="BK001100">
    <property type="protein sequence ID" value="DAA01207.1"/>
    <property type="molecule type" value="Genomic_DNA"/>
</dbReference>
<dbReference type="CCDS" id="CCDS5885.1"/>
<dbReference type="RefSeq" id="NP_803186.1">
    <property type="nucleotide sequence ID" value="NM_177437.1"/>
</dbReference>
<dbReference type="SMR" id="P59551"/>
<dbReference type="BioGRID" id="130733">
    <property type="interactions" value="4"/>
</dbReference>
<dbReference type="FunCoup" id="P59551">
    <property type="interactions" value="242"/>
</dbReference>
<dbReference type="IntAct" id="P59551">
    <property type="interactions" value="3"/>
</dbReference>
<dbReference type="STRING" id="9606.ENSP00000327724"/>
<dbReference type="BindingDB" id="P59551"/>
<dbReference type="ChEMBL" id="CHEMBL3309109"/>
<dbReference type="DrugCentral" id="P59551"/>
<dbReference type="GlyCosmos" id="P59551">
    <property type="glycosylation" value="1 site, No reported glycans"/>
</dbReference>
<dbReference type="GlyGen" id="P59551">
    <property type="glycosylation" value="1 site"/>
</dbReference>
<dbReference type="PhosphoSitePlus" id="P59551"/>
<dbReference type="BioMuta" id="TAS2R60"/>
<dbReference type="DMDM" id="29839489"/>
<dbReference type="jPOST" id="P59551"/>
<dbReference type="MassIVE" id="P59551"/>
<dbReference type="PaxDb" id="9606-ENSP00000327724"/>
<dbReference type="PeptideAtlas" id="P59551"/>
<dbReference type="ProteomicsDB" id="57152"/>
<dbReference type="Antibodypedia" id="32663">
    <property type="antibodies" value="39 antibodies from 13 providers"/>
</dbReference>
<dbReference type="DNASU" id="338398"/>
<dbReference type="Ensembl" id="ENST00000332690.1">
    <property type="protein sequence ID" value="ENSP00000327724.1"/>
    <property type="gene ID" value="ENSG00000185899.1"/>
</dbReference>
<dbReference type="Ensembl" id="ENST00000642941.1">
    <property type="protein sequence ID" value="ENSP00000494922.1"/>
    <property type="gene ID" value="ENSG00000285341.1"/>
</dbReference>
<dbReference type="GeneID" id="338398"/>
<dbReference type="KEGG" id="hsa:338398"/>
<dbReference type="MANE-Select" id="ENST00000332690.1">
    <property type="protein sequence ID" value="ENSP00000327724.1"/>
    <property type="RefSeq nucleotide sequence ID" value="NM_177437.1"/>
    <property type="RefSeq protein sequence ID" value="NP_803186.1"/>
</dbReference>
<dbReference type="UCSC" id="uc011ktg.2">
    <property type="organism name" value="human"/>
</dbReference>
<dbReference type="AGR" id="HGNC:20639"/>
<dbReference type="CTD" id="338398"/>
<dbReference type="GeneCards" id="TAS2R60"/>
<dbReference type="HGNC" id="HGNC:20639">
    <property type="gene designation" value="TAS2R60"/>
</dbReference>
<dbReference type="HPA" id="ENSG00000185899">
    <property type="expression patterns" value="Not detected"/>
</dbReference>
<dbReference type="MIM" id="613968">
    <property type="type" value="gene"/>
</dbReference>
<dbReference type="neXtProt" id="NX_P59551"/>
<dbReference type="PharmGKB" id="PA134879120"/>
<dbReference type="VEuPathDB" id="HostDB:ENSG00000185899"/>
<dbReference type="eggNOG" id="ENOG502S2SI">
    <property type="taxonomic scope" value="Eukaryota"/>
</dbReference>
<dbReference type="GeneTree" id="ENSGT01100000263477"/>
<dbReference type="HOGENOM" id="CLU_072337_1_1_1"/>
<dbReference type="InParanoid" id="P59551"/>
<dbReference type="OMA" id="CLQWVVI"/>
<dbReference type="OrthoDB" id="9836876at2759"/>
<dbReference type="PAN-GO" id="P59551">
    <property type="GO annotations" value="1 GO annotation based on evolutionary models"/>
</dbReference>
<dbReference type="PhylomeDB" id="P59551"/>
<dbReference type="TreeFam" id="TF335891"/>
<dbReference type="PathwayCommons" id="P59551"/>
<dbReference type="Reactome" id="R-HSA-418594">
    <property type="pathway name" value="G alpha (i) signalling events"/>
</dbReference>
<dbReference type="Reactome" id="R-HSA-420499">
    <property type="pathway name" value="Class C/3 (Metabotropic glutamate/pheromone receptors)"/>
</dbReference>
<dbReference type="SignaLink" id="P59551"/>
<dbReference type="BioGRID-ORCS" id="338398">
    <property type="hits" value="12 hits in 1137 CRISPR screens"/>
</dbReference>
<dbReference type="GeneWiki" id="TAS2R60"/>
<dbReference type="GenomeRNAi" id="338398"/>
<dbReference type="Pharos" id="P59551">
    <property type="development level" value="Tchem"/>
</dbReference>
<dbReference type="PRO" id="PR:P59551"/>
<dbReference type="Proteomes" id="UP000005640">
    <property type="component" value="Chromosome 7"/>
</dbReference>
<dbReference type="RNAct" id="P59551">
    <property type="molecule type" value="protein"/>
</dbReference>
<dbReference type="Bgee" id="ENSG00000185899">
    <property type="expression patterns" value="Expressed in primordial germ cell in gonad and 16 other cell types or tissues"/>
</dbReference>
<dbReference type="GO" id="GO:0016020">
    <property type="term" value="C:membrane"/>
    <property type="evidence" value="ECO:0000314"/>
    <property type="project" value="UniProtKB"/>
</dbReference>
<dbReference type="GO" id="GO:0005886">
    <property type="term" value="C:plasma membrane"/>
    <property type="evidence" value="ECO:0000304"/>
    <property type="project" value="Reactome"/>
</dbReference>
<dbReference type="GO" id="GO:0004930">
    <property type="term" value="F:G protein-coupled receptor activity"/>
    <property type="evidence" value="ECO:0000303"/>
    <property type="project" value="UniProtKB"/>
</dbReference>
<dbReference type="GO" id="GO:0050913">
    <property type="term" value="P:sensory perception of bitter taste"/>
    <property type="evidence" value="ECO:0000303"/>
    <property type="project" value="UniProtKB"/>
</dbReference>
<dbReference type="CDD" id="cd15018">
    <property type="entry name" value="7tm_TAS2R41-like"/>
    <property type="match status" value="1"/>
</dbReference>
<dbReference type="FunFam" id="1.20.1070.10:FF:000055">
    <property type="entry name" value="Taste receptor type 2"/>
    <property type="match status" value="1"/>
</dbReference>
<dbReference type="Gene3D" id="1.20.1070.10">
    <property type="entry name" value="Rhodopsin 7-helix transmembrane proteins"/>
    <property type="match status" value="1"/>
</dbReference>
<dbReference type="InterPro" id="IPR007960">
    <property type="entry name" value="TAS2R"/>
</dbReference>
<dbReference type="PANTHER" id="PTHR11394">
    <property type="entry name" value="TASTE RECEPTOR TYPE 2"/>
    <property type="match status" value="1"/>
</dbReference>
<dbReference type="PANTHER" id="PTHR11394:SF32">
    <property type="entry name" value="TASTE RECEPTOR TYPE 2 MEMBER 60"/>
    <property type="match status" value="1"/>
</dbReference>
<dbReference type="Pfam" id="PF05296">
    <property type="entry name" value="TAS2R"/>
    <property type="match status" value="1"/>
</dbReference>
<dbReference type="SUPFAM" id="SSF81321">
    <property type="entry name" value="Family A G protein-coupled receptor-like"/>
    <property type="match status" value="1"/>
</dbReference>
<evidence type="ECO:0000250" key="1"/>
<evidence type="ECO:0000255" key="2"/>
<evidence type="ECO:0000305" key="3"/>
<protein>
    <recommendedName>
        <fullName>Taste receptor type 2 member 60</fullName>
        <shortName>T2R60</shortName>
    </recommendedName>
    <alternativeName>
        <fullName>Taste receptor type 2 member 56</fullName>
        <shortName>T2R56</shortName>
    </alternativeName>
</protein>